<proteinExistence type="inferred from homology"/>
<feature type="chain" id="PRO_1000017501" description="Large ribosomal subunit protein bL27">
    <location>
        <begin position="1"/>
        <end position="89"/>
    </location>
</feature>
<feature type="region of interest" description="Disordered" evidence="2">
    <location>
        <begin position="1"/>
        <end position="20"/>
    </location>
</feature>
<keyword id="KW-1185">Reference proteome</keyword>
<keyword id="KW-0687">Ribonucleoprotein</keyword>
<keyword id="KW-0689">Ribosomal protein</keyword>
<evidence type="ECO:0000255" key="1">
    <source>
        <dbReference type="HAMAP-Rule" id="MF_00539"/>
    </source>
</evidence>
<evidence type="ECO:0000256" key="2">
    <source>
        <dbReference type="SAM" id="MobiDB-lite"/>
    </source>
</evidence>
<evidence type="ECO:0000305" key="3"/>
<protein>
    <recommendedName>
        <fullName evidence="1">Large ribosomal subunit protein bL27</fullName>
    </recommendedName>
    <alternativeName>
        <fullName evidence="3">50S ribosomal protein L27</fullName>
    </alternativeName>
</protein>
<name>RL27_JANSC</name>
<reference key="1">
    <citation type="submission" date="2006-02" db="EMBL/GenBank/DDBJ databases">
        <title>Complete sequence of chromosome of Jannaschia sp. CCS1.</title>
        <authorList>
            <consortium name="US DOE Joint Genome Institute"/>
            <person name="Copeland A."/>
            <person name="Lucas S."/>
            <person name="Lapidus A."/>
            <person name="Barry K."/>
            <person name="Detter J.C."/>
            <person name="Glavina del Rio T."/>
            <person name="Hammon N."/>
            <person name="Israni S."/>
            <person name="Pitluck S."/>
            <person name="Brettin T."/>
            <person name="Bruce D."/>
            <person name="Han C."/>
            <person name="Tapia R."/>
            <person name="Gilna P."/>
            <person name="Chertkov O."/>
            <person name="Saunders E."/>
            <person name="Schmutz J."/>
            <person name="Larimer F."/>
            <person name="Land M."/>
            <person name="Kyrpides N."/>
            <person name="Lykidis A."/>
            <person name="Moran M.A."/>
            <person name="Belas R."/>
            <person name="Ye W."/>
            <person name="Buchan A."/>
            <person name="Gonzalez J.M."/>
            <person name="Schell M.A."/>
            <person name="Richardson P."/>
        </authorList>
    </citation>
    <scope>NUCLEOTIDE SEQUENCE [LARGE SCALE GENOMIC DNA]</scope>
    <source>
        <strain>CCS1</strain>
    </source>
</reference>
<comment type="similarity">
    <text evidence="1">Belongs to the bacterial ribosomal protein bL27 family.</text>
</comment>
<dbReference type="EMBL" id="CP000264">
    <property type="protein sequence ID" value="ABD55198.1"/>
    <property type="molecule type" value="Genomic_DNA"/>
</dbReference>
<dbReference type="RefSeq" id="WP_011455402.1">
    <property type="nucleotide sequence ID" value="NC_007802.1"/>
</dbReference>
<dbReference type="SMR" id="Q28Q14"/>
<dbReference type="STRING" id="290400.Jann_2281"/>
<dbReference type="KEGG" id="jan:Jann_2281"/>
<dbReference type="eggNOG" id="COG0211">
    <property type="taxonomic scope" value="Bacteria"/>
</dbReference>
<dbReference type="HOGENOM" id="CLU_095424_4_1_5"/>
<dbReference type="OrthoDB" id="9803474at2"/>
<dbReference type="Proteomes" id="UP000008326">
    <property type="component" value="Chromosome"/>
</dbReference>
<dbReference type="GO" id="GO:0022625">
    <property type="term" value="C:cytosolic large ribosomal subunit"/>
    <property type="evidence" value="ECO:0007669"/>
    <property type="project" value="TreeGrafter"/>
</dbReference>
<dbReference type="GO" id="GO:0003735">
    <property type="term" value="F:structural constituent of ribosome"/>
    <property type="evidence" value="ECO:0007669"/>
    <property type="project" value="InterPro"/>
</dbReference>
<dbReference type="GO" id="GO:0006412">
    <property type="term" value="P:translation"/>
    <property type="evidence" value="ECO:0007669"/>
    <property type="project" value="UniProtKB-UniRule"/>
</dbReference>
<dbReference type="FunFam" id="2.40.50.100:FF:000060">
    <property type="entry name" value="Apicoplast ribosomal protein L27"/>
    <property type="match status" value="1"/>
</dbReference>
<dbReference type="Gene3D" id="2.40.50.100">
    <property type="match status" value="1"/>
</dbReference>
<dbReference type="HAMAP" id="MF_00539">
    <property type="entry name" value="Ribosomal_bL27"/>
    <property type="match status" value="1"/>
</dbReference>
<dbReference type="InterPro" id="IPR001684">
    <property type="entry name" value="Ribosomal_bL27"/>
</dbReference>
<dbReference type="InterPro" id="IPR018261">
    <property type="entry name" value="Ribosomal_bL27_CS"/>
</dbReference>
<dbReference type="NCBIfam" id="TIGR00062">
    <property type="entry name" value="L27"/>
    <property type="match status" value="1"/>
</dbReference>
<dbReference type="PANTHER" id="PTHR15893:SF0">
    <property type="entry name" value="LARGE RIBOSOMAL SUBUNIT PROTEIN BL27M"/>
    <property type="match status" value="1"/>
</dbReference>
<dbReference type="PANTHER" id="PTHR15893">
    <property type="entry name" value="RIBOSOMAL PROTEIN L27"/>
    <property type="match status" value="1"/>
</dbReference>
<dbReference type="Pfam" id="PF01016">
    <property type="entry name" value="Ribosomal_L27"/>
    <property type="match status" value="1"/>
</dbReference>
<dbReference type="PRINTS" id="PR00063">
    <property type="entry name" value="RIBOSOMALL27"/>
</dbReference>
<dbReference type="SUPFAM" id="SSF110324">
    <property type="entry name" value="Ribosomal L27 protein-like"/>
    <property type="match status" value="1"/>
</dbReference>
<dbReference type="PROSITE" id="PS00831">
    <property type="entry name" value="RIBOSOMAL_L27"/>
    <property type="match status" value="1"/>
</dbReference>
<accession>Q28Q14</accession>
<organism>
    <name type="scientific">Jannaschia sp. (strain CCS1)</name>
    <dbReference type="NCBI Taxonomy" id="290400"/>
    <lineage>
        <taxon>Bacteria</taxon>
        <taxon>Pseudomonadati</taxon>
        <taxon>Pseudomonadota</taxon>
        <taxon>Alphaproteobacteria</taxon>
        <taxon>Rhodobacterales</taxon>
        <taxon>Roseobacteraceae</taxon>
        <taxon>Jannaschia</taxon>
    </lineage>
</organism>
<gene>
    <name evidence="1" type="primary">rpmA</name>
    <name type="ordered locus">Jann_2281</name>
</gene>
<sequence>MAHKKAGGSSRNGRDSAGRRLGIKKYGGESVIAGNIIARQRGNKWWPGEGVGEGKDHTIYAVADGHVSFKKGFKGRTFISVLPAAEAAE</sequence>